<evidence type="ECO:0000250" key="1"/>
<evidence type="ECO:0000305" key="2"/>
<name>SYH_PYRHO</name>
<organism>
    <name type="scientific">Pyrococcus horikoshii (strain ATCC 700860 / DSM 12428 / JCM 9974 / NBRC 100139 / OT-3)</name>
    <dbReference type="NCBI Taxonomy" id="70601"/>
    <lineage>
        <taxon>Archaea</taxon>
        <taxon>Methanobacteriati</taxon>
        <taxon>Methanobacteriota</taxon>
        <taxon>Thermococci</taxon>
        <taxon>Thermococcales</taxon>
        <taxon>Thermococcaceae</taxon>
        <taxon>Pyrococcus</taxon>
    </lineage>
</organism>
<proteinExistence type="inferred from homology"/>
<gene>
    <name type="primary">hisS</name>
    <name type="ordered locus">PH0290</name>
    <name type="ORF">PHBM048</name>
</gene>
<dbReference type="EC" id="6.1.1.21"/>
<dbReference type="EMBL" id="BA000001">
    <property type="protein sequence ID" value="BAA29362.1"/>
    <property type="molecule type" value="Genomic_DNA"/>
</dbReference>
<dbReference type="PIR" id="C71454">
    <property type="entry name" value="C71454"/>
</dbReference>
<dbReference type="RefSeq" id="WP_010884386.1">
    <property type="nucleotide sequence ID" value="NC_000961.1"/>
</dbReference>
<dbReference type="SMR" id="O58028"/>
<dbReference type="STRING" id="70601.gene:9377206"/>
<dbReference type="EnsemblBacteria" id="BAA29362">
    <property type="protein sequence ID" value="BAA29362"/>
    <property type="gene ID" value="BAA29362"/>
</dbReference>
<dbReference type="GeneID" id="1444173"/>
<dbReference type="KEGG" id="pho:PH0290"/>
<dbReference type="eggNOG" id="arCOG00404">
    <property type="taxonomic scope" value="Archaea"/>
</dbReference>
<dbReference type="OrthoDB" id="8659at2157"/>
<dbReference type="Proteomes" id="UP000000752">
    <property type="component" value="Chromosome"/>
</dbReference>
<dbReference type="GO" id="GO:0005737">
    <property type="term" value="C:cytoplasm"/>
    <property type="evidence" value="ECO:0007669"/>
    <property type="project" value="UniProtKB-SubCell"/>
</dbReference>
<dbReference type="GO" id="GO:0005524">
    <property type="term" value="F:ATP binding"/>
    <property type="evidence" value="ECO:0007669"/>
    <property type="project" value="UniProtKB-UniRule"/>
</dbReference>
<dbReference type="GO" id="GO:0004821">
    <property type="term" value="F:histidine-tRNA ligase activity"/>
    <property type="evidence" value="ECO:0007669"/>
    <property type="project" value="UniProtKB-UniRule"/>
</dbReference>
<dbReference type="GO" id="GO:0006427">
    <property type="term" value="P:histidyl-tRNA aminoacylation"/>
    <property type="evidence" value="ECO:0007669"/>
    <property type="project" value="UniProtKB-UniRule"/>
</dbReference>
<dbReference type="GO" id="GO:0000105">
    <property type="term" value="P:L-histidine biosynthetic process"/>
    <property type="evidence" value="ECO:0007669"/>
    <property type="project" value="InterPro"/>
</dbReference>
<dbReference type="CDD" id="cd00773">
    <property type="entry name" value="HisRS-like_core"/>
    <property type="match status" value="1"/>
</dbReference>
<dbReference type="CDD" id="cd00859">
    <property type="entry name" value="HisRS_anticodon"/>
    <property type="match status" value="1"/>
</dbReference>
<dbReference type="FunFam" id="3.30.930.10:FF:000054">
    <property type="entry name" value="Histidine--tRNA ligase chloroplastic/mitochondrial"/>
    <property type="match status" value="1"/>
</dbReference>
<dbReference type="Gene3D" id="3.40.50.800">
    <property type="entry name" value="Anticodon-binding domain"/>
    <property type="match status" value="1"/>
</dbReference>
<dbReference type="Gene3D" id="3.30.930.10">
    <property type="entry name" value="Bira Bifunctional Protein, Domain 2"/>
    <property type="match status" value="1"/>
</dbReference>
<dbReference type="HAMAP" id="MF_00127">
    <property type="entry name" value="His_tRNA_synth"/>
    <property type="match status" value="1"/>
</dbReference>
<dbReference type="HAMAP" id="MF_00125">
    <property type="entry name" value="HisZ"/>
    <property type="match status" value="1"/>
</dbReference>
<dbReference type="InterPro" id="IPR006195">
    <property type="entry name" value="aa-tRNA-synth_II"/>
</dbReference>
<dbReference type="InterPro" id="IPR045864">
    <property type="entry name" value="aa-tRNA-synth_II/BPL/LPL"/>
</dbReference>
<dbReference type="InterPro" id="IPR004154">
    <property type="entry name" value="Anticodon-bd"/>
</dbReference>
<dbReference type="InterPro" id="IPR036621">
    <property type="entry name" value="Anticodon-bd_dom_sf"/>
</dbReference>
<dbReference type="InterPro" id="IPR015807">
    <property type="entry name" value="His-tRNA-ligase"/>
</dbReference>
<dbReference type="InterPro" id="IPR041715">
    <property type="entry name" value="HisRS-like_core"/>
</dbReference>
<dbReference type="InterPro" id="IPR004516">
    <property type="entry name" value="HisRS/HisZ"/>
</dbReference>
<dbReference type="InterPro" id="IPR033656">
    <property type="entry name" value="HisRS_anticodon"/>
</dbReference>
<dbReference type="InterPro" id="IPR004517">
    <property type="entry name" value="HisZ"/>
</dbReference>
<dbReference type="NCBIfam" id="TIGR00442">
    <property type="entry name" value="hisS"/>
    <property type="match status" value="1"/>
</dbReference>
<dbReference type="NCBIfam" id="TIGR00443">
    <property type="entry name" value="hisZ_biosyn_reg"/>
    <property type="match status" value="1"/>
</dbReference>
<dbReference type="PANTHER" id="PTHR43707:SF1">
    <property type="entry name" value="HISTIDINE--TRNA LIGASE, MITOCHONDRIAL-RELATED"/>
    <property type="match status" value="1"/>
</dbReference>
<dbReference type="PANTHER" id="PTHR43707">
    <property type="entry name" value="HISTIDYL-TRNA SYNTHETASE"/>
    <property type="match status" value="1"/>
</dbReference>
<dbReference type="Pfam" id="PF03129">
    <property type="entry name" value="HGTP_anticodon"/>
    <property type="match status" value="1"/>
</dbReference>
<dbReference type="Pfam" id="PF13393">
    <property type="entry name" value="tRNA-synt_His"/>
    <property type="match status" value="1"/>
</dbReference>
<dbReference type="PIRSF" id="PIRSF001549">
    <property type="entry name" value="His-tRNA_synth"/>
    <property type="match status" value="1"/>
</dbReference>
<dbReference type="SUPFAM" id="SSF52954">
    <property type="entry name" value="Class II aaRS ABD-related"/>
    <property type="match status" value="1"/>
</dbReference>
<dbReference type="SUPFAM" id="SSF55681">
    <property type="entry name" value="Class II aaRS and biotin synthetases"/>
    <property type="match status" value="1"/>
</dbReference>
<dbReference type="PROSITE" id="PS50862">
    <property type="entry name" value="AA_TRNA_LIGASE_II"/>
    <property type="match status" value="1"/>
</dbReference>
<keyword id="KW-0030">Aminoacyl-tRNA synthetase</keyword>
<keyword id="KW-0067">ATP-binding</keyword>
<keyword id="KW-0963">Cytoplasm</keyword>
<keyword id="KW-0436">Ligase</keyword>
<keyword id="KW-0547">Nucleotide-binding</keyword>
<keyword id="KW-0648">Protein biosynthesis</keyword>
<comment type="catalytic activity">
    <reaction>
        <text>tRNA(His) + L-histidine + ATP = L-histidyl-tRNA(His) + AMP + diphosphate + H(+)</text>
        <dbReference type="Rhea" id="RHEA:17313"/>
        <dbReference type="Rhea" id="RHEA-COMP:9665"/>
        <dbReference type="Rhea" id="RHEA-COMP:9689"/>
        <dbReference type="ChEBI" id="CHEBI:15378"/>
        <dbReference type="ChEBI" id="CHEBI:30616"/>
        <dbReference type="ChEBI" id="CHEBI:33019"/>
        <dbReference type="ChEBI" id="CHEBI:57595"/>
        <dbReference type="ChEBI" id="CHEBI:78442"/>
        <dbReference type="ChEBI" id="CHEBI:78527"/>
        <dbReference type="ChEBI" id="CHEBI:456215"/>
        <dbReference type="EC" id="6.1.1.21"/>
    </reaction>
</comment>
<comment type="subcellular location">
    <subcellularLocation>
        <location evidence="1">Cytoplasm</location>
    </subcellularLocation>
</comment>
<comment type="similarity">
    <text evidence="2">Belongs to the class-II aminoacyl-tRNA synthetase family.</text>
</comment>
<reference key="1">
    <citation type="journal article" date="1998" name="DNA Res.">
        <title>Complete sequence and gene organization of the genome of a hyper-thermophilic archaebacterium, Pyrococcus horikoshii OT3.</title>
        <authorList>
            <person name="Kawarabayasi Y."/>
            <person name="Sawada M."/>
            <person name="Horikawa H."/>
            <person name="Haikawa Y."/>
            <person name="Hino Y."/>
            <person name="Yamamoto S."/>
            <person name="Sekine M."/>
            <person name="Baba S."/>
            <person name="Kosugi H."/>
            <person name="Hosoyama A."/>
            <person name="Nagai Y."/>
            <person name="Sakai M."/>
            <person name="Ogura K."/>
            <person name="Otsuka R."/>
            <person name="Nakazawa H."/>
            <person name="Takamiya M."/>
            <person name="Ohfuku Y."/>
            <person name="Funahashi T."/>
            <person name="Tanaka T."/>
            <person name="Kudoh Y."/>
            <person name="Yamazaki J."/>
            <person name="Kushida N."/>
            <person name="Oguchi A."/>
            <person name="Aoki K."/>
            <person name="Yoshizawa T."/>
            <person name="Nakamura Y."/>
            <person name="Robb F.T."/>
            <person name="Horikoshi K."/>
            <person name="Masuchi Y."/>
            <person name="Shizuya H."/>
            <person name="Kikuchi H."/>
        </authorList>
    </citation>
    <scope>NUCLEOTIDE SEQUENCE [LARGE SCALE GENOMIC DNA]</scope>
    <source>
        <strain>ATCC 700860 / DSM 12428 / JCM 9974 / NBRC 100139 / OT-3</strain>
    </source>
</reference>
<sequence length="431" mass="49175">MIERVKGTRDFLPEDMAKRRWVFEKIREVFEAYGFKEILTPVMEYTKLFQLRSGEEVVKQLYAFKDKGGRDVSLRPDMTSSVARLYVNSFQMAPKPIKWYYIANMFRYEEPQSGRYREFWQAGVELIGSDKVEADAEVIALFVESYLSTGLRDFTVNIGDRILLDEFAGMLGVSDDIGLMRIIDKRDKLSQEEFINLLKEFGLGESEIEKVLELVEIKGRPDNVLPLAEELFKSKKAKEEISKLYKLTDLLEWYGVKDWIRIDLGIARGFDYYTSIVFEAISPNELGIGSIGGGGRYDNLIEIFGGKPTPATGFAIGIERLLPILEWKGLIPKPQTGPEVFVIPLKDMEKVAINIAVKLRREKIKTDIELSGRKLGKALDYANRVGAKLVIIVGKRDVERGVVTIRDMESGEQYNVSLNEIVDKVKNLLKR</sequence>
<accession>O58028</accession>
<feature type="chain" id="PRO_0000136322" description="Histidine--tRNA ligase">
    <location>
        <begin position="1"/>
        <end position="431"/>
    </location>
</feature>
<protein>
    <recommendedName>
        <fullName>Histidine--tRNA ligase</fullName>
        <ecNumber>6.1.1.21</ecNumber>
    </recommendedName>
    <alternativeName>
        <fullName>Histidyl-tRNA synthetase</fullName>
        <shortName>HisRS</shortName>
    </alternativeName>
</protein>